<evidence type="ECO:0000255" key="1">
    <source>
        <dbReference type="HAMAP-Rule" id="MF_00736"/>
    </source>
</evidence>
<evidence type="ECO:0000305" key="2"/>
<name>RL11_SALSV</name>
<reference key="1">
    <citation type="journal article" date="2011" name="J. Bacteriol.">
        <title>Comparative genomics of 28 Salmonella enterica isolates: evidence for CRISPR-mediated adaptive sublineage evolution.</title>
        <authorList>
            <person name="Fricke W.F."/>
            <person name="Mammel M.K."/>
            <person name="McDermott P.F."/>
            <person name="Tartera C."/>
            <person name="White D.G."/>
            <person name="Leclerc J.E."/>
            <person name="Ravel J."/>
            <person name="Cebula T.A."/>
        </authorList>
    </citation>
    <scope>NUCLEOTIDE SEQUENCE [LARGE SCALE GENOMIC DNA]</scope>
    <source>
        <strain>CVM19633</strain>
    </source>
</reference>
<sequence>MAKKVQAYVKLQVAAGMANPSPPVGPALGQQGVNIMEFCKAFNAKTDSIEKGLPIPVVITVYADRSFTFVTKTPPAAVLLKKAAGIKSGSGKPNKDKVGKISRAQLQEIAQTKAADMTGADIEAMTRSIEGTARSMGLVVED</sequence>
<protein>
    <recommendedName>
        <fullName evidence="1">Large ribosomal subunit protein uL11</fullName>
    </recommendedName>
    <alternativeName>
        <fullName evidence="2">50S ribosomal protein L11</fullName>
    </alternativeName>
</protein>
<feature type="chain" id="PRO_1000195712" description="Large ribosomal subunit protein uL11">
    <location>
        <begin position="1"/>
        <end position="142"/>
    </location>
</feature>
<proteinExistence type="inferred from homology"/>
<dbReference type="EMBL" id="CP001127">
    <property type="protein sequence ID" value="ACF89469.1"/>
    <property type="molecule type" value="Genomic_DNA"/>
</dbReference>
<dbReference type="RefSeq" id="WP_001085926.1">
    <property type="nucleotide sequence ID" value="NC_011094.1"/>
</dbReference>
<dbReference type="SMR" id="B4TQJ1"/>
<dbReference type="GeneID" id="93777911"/>
<dbReference type="KEGG" id="sew:SeSA_A4359"/>
<dbReference type="HOGENOM" id="CLU_074237_2_0_6"/>
<dbReference type="Proteomes" id="UP000001865">
    <property type="component" value="Chromosome"/>
</dbReference>
<dbReference type="GO" id="GO:0022625">
    <property type="term" value="C:cytosolic large ribosomal subunit"/>
    <property type="evidence" value="ECO:0007669"/>
    <property type="project" value="TreeGrafter"/>
</dbReference>
<dbReference type="GO" id="GO:0070180">
    <property type="term" value="F:large ribosomal subunit rRNA binding"/>
    <property type="evidence" value="ECO:0007669"/>
    <property type="project" value="UniProtKB-UniRule"/>
</dbReference>
<dbReference type="GO" id="GO:0003735">
    <property type="term" value="F:structural constituent of ribosome"/>
    <property type="evidence" value="ECO:0007669"/>
    <property type="project" value="InterPro"/>
</dbReference>
<dbReference type="GO" id="GO:0006412">
    <property type="term" value="P:translation"/>
    <property type="evidence" value="ECO:0007669"/>
    <property type="project" value="UniProtKB-UniRule"/>
</dbReference>
<dbReference type="CDD" id="cd00349">
    <property type="entry name" value="Ribosomal_L11"/>
    <property type="match status" value="1"/>
</dbReference>
<dbReference type="FunFam" id="1.10.10.250:FF:000001">
    <property type="entry name" value="50S ribosomal protein L11"/>
    <property type="match status" value="1"/>
</dbReference>
<dbReference type="FunFam" id="3.30.1550.10:FF:000001">
    <property type="entry name" value="50S ribosomal protein L11"/>
    <property type="match status" value="1"/>
</dbReference>
<dbReference type="Gene3D" id="1.10.10.250">
    <property type="entry name" value="Ribosomal protein L11, C-terminal domain"/>
    <property type="match status" value="1"/>
</dbReference>
<dbReference type="Gene3D" id="3.30.1550.10">
    <property type="entry name" value="Ribosomal protein L11/L12, N-terminal domain"/>
    <property type="match status" value="1"/>
</dbReference>
<dbReference type="HAMAP" id="MF_00736">
    <property type="entry name" value="Ribosomal_uL11"/>
    <property type="match status" value="1"/>
</dbReference>
<dbReference type="InterPro" id="IPR000911">
    <property type="entry name" value="Ribosomal_uL11"/>
</dbReference>
<dbReference type="InterPro" id="IPR006519">
    <property type="entry name" value="Ribosomal_uL11_bac-typ"/>
</dbReference>
<dbReference type="InterPro" id="IPR020783">
    <property type="entry name" value="Ribosomal_uL11_C"/>
</dbReference>
<dbReference type="InterPro" id="IPR036769">
    <property type="entry name" value="Ribosomal_uL11_C_sf"/>
</dbReference>
<dbReference type="InterPro" id="IPR020785">
    <property type="entry name" value="Ribosomal_uL11_CS"/>
</dbReference>
<dbReference type="InterPro" id="IPR020784">
    <property type="entry name" value="Ribosomal_uL11_N"/>
</dbReference>
<dbReference type="InterPro" id="IPR036796">
    <property type="entry name" value="Ribosomal_uL11_N_sf"/>
</dbReference>
<dbReference type="NCBIfam" id="TIGR01632">
    <property type="entry name" value="L11_bact"/>
    <property type="match status" value="1"/>
</dbReference>
<dbReference type="PANTHER" id="PTHR11661">
    <property type="entry name" value="60S RIBOSOMAL PROTEIN L12"/>
    <property type="match status" value="1"/>
</dbReference>
<dbReference type="PANTHER" id="PTHR11661:SF1">
    <property type="entry name" value="LARGE RIBOSOMAL SUBUNIT PROTEIN UL11M"/>
    <property type="match status" value="1"/>
</dbReference>
<dbReference type="Pfam" id="PF00298">
    <property type="entry name" value="Ribosomal_L11"/>
    <property type="match status" value="1"/>
</dbReference>
<dbReference type="Pfam" id="PF03946">
    <property type="entry name" value="Ribosomal_L11_N"/>
    <property type="match status" value="1"/>
</dbReference>
<dbReference type="SMART" id="SM00649">
    <property type="entry name" value="RL11"/>
    <property type="match status" value="1"/>
</dbReference>
<dbReference type="SUPFAM" id="SSF54747">
    <property type="entry name" value="Ribosomal L11/L12e N-terminal domain"/>
    <property type="match status" value="1"/>
</dbReference>
<dbReference type="SUPFAM" id="SSF46906">
    <property type="entry name" value="Ribosomal protein L11, C-terminal domain"/>
    <property type="match status" value="1"/>
</dbReference>
<dbReference type="PROSITE" id="PS00359">
    <property type="entry name" value="RIBOSOMAL_L11"/>
    <property type="match status" value="1"/>
</dbReference>
<accession>B4TQJ1</accession>
<keyword id="KW-0488">Methylation</keyword>
<keyword id="KW-0687">Ribonucleoprotein</keyword>
<keyword id="KW-0689">Ribosomal protein</keyword>
<keyword id="KW-0694">RNA-binding</keyword>
<keyword id="KW-0699">rRNA-binding</keyword>
<organism>
    <name type="scientific">Salmonella schwarzengrund (strain CVM19633)</name>
    <dbReference type="NCBI Taxonomy" id="439843"/>
    <lineage>
        <taxon>Bacteria</taxon>
        <taxon>Pseudomonadati</taxon>
        <taxon>Pseudomonadota</taxon>
        <taxon>Gammaproteobacteria</taxon>
        <taxon>Enterobacterales</taxon>
        <taxon>Enterobacteriaceae</taxon>
        <taxon>Salmonella</taxon>
    </lineage>
</organism>
<comment type="function">
    <text evidence="1">Forms part of the ribosomal stalk which helps the ribosome interact with GTP-bound translation factors.</text>
</comment>
<comment type="subunit">
    <text evidence="1">Part of the ribosomal stalk of the 50S ribosomal subunit. Interacts with L10 and the large rRNA to form the base of the stalk. L10 forms an elongated spine to which L12 dimers bind in a sequential fashion forming a multimeric L10(L12)X complex.</text>
</comment>
<comment type="PTM">
    <text evidence="1">One or more lysine residues are methylated.</text>
</comment>
<comment type="similarity">
    <text evidence="1">Belongs to the universal ribosomal protein uL11 family.</text>
</comment>
<gene>
    <name evidence="1" type="primary">rplK</name>
    <name type="ordered locus">SeSA_A4359</name>
</gene>